<dbReference type="EMBL" id="L19969">
    <property type="protein sequence ID" value="AAA42847.1"/>
    <property type="molecule type" value="Genomic_RNA"/>
</dbReference>
<dbReference type="SMR" id="Q65750"/>
<dbReference type="GO" id="GO:0044423">
    <property type="term" value="C:virion component"/>
    <property type="evidence" value="ECO:0007669"/>
    <property type="project" value="UniProtKB-KW"/>
</dbReference>
<dbReference type="GO" id="GO:0005198">
    <property type="term" value="F:structural molecule activity"/>
    <property type="evidence" value="ECO:0007669"/>
    <property type="project" value="InterPro"/>
</dbReference>
<dbReference type="InterPro" id="IPR002614">
    <property type="entry name" value="Inner_layer_core_VP3_Orbivir"/>
</dbReference>
<dbReference type="InterPro" id="IPR016029">
    <property type="entry name" value="Inner_layer_core_VP3_Reovir"/>
</dbReference>
<dbReference type="Pfam" id="PF01700">
    <property type="entry name" value="Orbi_VP3"/>
    <property type="match status" value="1"/>
</dbReference>
<dbReference type="SUPFAM" id="SSF56831">
    <property type="entry name" value="Reovirus inner layer core protein p3"/>
    <property type="match status" value="1"/>
</dbReference>
<organism>
    <name type="scientific">Bluetongue virus 13 (isolate USA)</name>
    <name type="common">BTV 13</name>
    <dbReference type="NCBI Taxonomy" id="33717"/>
    <lineage>
        <taxon>Viruses</taxon>
        <taxon>Riboviria</taxon>
        <taxon>Orthornavirae</taxon>
        <taxon>Duplornaviricota</taxon>
        <taxon>Resentoviricetes</taxon>
        <taxon>Reovirales</taxon>
        <taxon>Sedoreoviridae</taxon>
        <taxon>Orbivirus</taxon>
        <taxon>Bluetongue virus</taxon>
    </lineage>
</organism>
<proteinExistence type="inferred from homology"/>
<reference key="1">
    <citation type="journal article" date="1994" name="Virus Res.">
        <title>Analyses and conservation of sequences among the cognate L3 segments of the five United States bluetongue viruses.</title>
        <authorList>
            <person name="Hwang G.-Y."/>
            <person name="Xiang M."/>
            <person name="Li J.K.-K."/>
        </authorList>
    </citation>
    <scope>NUCLEOTIDE SEQUENCE [GENOMIC RNA]</scope>
</reference>
<feature type="chain" id="PRO_0000222697" description="Inner capsid protein VP3">
    <location>
        <begin position="1"/>
        <end position="901"/>
    </location>
</feature>
<comment type="function">
    <text evidence="1">Inner capsid protein that self-assembles to form an icosahedral capsid with a T=2 symmetry, which consists of 120 copies of VP2, with channels at each of its five-fold vertices. This capsid constitutes the innermost concentric layer of the viral mature particle.</text>
</comment>
<comment type="subunit">
    <text evidence="1">Homodecamer; each decamer is made up of two conformers of VP2, called VP2A and VP2B. 12 homodecamers assemble to form an icosahedral capsid.</text>
</comment>
<comment type="subcellular location">
    <subcellularLocation>
        <location evidence="1">Virion</location>
    </subcellularLocation>
    <text evidence="1">Found in the inner capsid (120 copies).</text>
</comment>
<comment type="miscellaneous">
    <text evidence="2">Function inferred by structural homology with BTV-fold inner capsid family.</text>
</comment>
<comment type="similarity">
    <text evidence="2">Belongs to the turreted BTV-fold inner capsid family.</text>
</comment>
<sequence length="901" mass="103370">MAAQNEQRPERIKTTPYLEGDVLSNDSGPLLSVFALQEIMQKVRQVQADYMTATREVDFTVPDVQKILDDIKTLAAEQVYKIVKIPSISFRHIVMQSRDRVLRVDTYYEEMSQVGDVITEDEPEKFYSTIIKKVRFIREKGSFILHDIPTRDHRGMEVAEPEVLGVEFKNVLPVLTAEHRAMIQNALDGSIIENGNVATRDVDVFIGACSEPIYRIYNRLQGYIEAVQLQELRNSIGWLGRLGQRKRITYSQEVLTDFRRQDTIWVLALQLPVNPQVVWDVPRSSIANLIMNIATCLPTGEYIAPNPRISSITLTQRITTTGPFAILTGSTPTAQQLNDVRKIYLALMFPGQIILDLKIDPGERMDPAVRMVAGVVGHLLFTAGGRFTNLTQDMARQLDIALNDYLLYMYNTRVQVKYGPTGEPLDFQMGRNQYDCNVFRADFATGTGYNGWATIDVEYRDPAPYVHAQRYIRYCGIDSRELINPTTYGIGMTYHCYNEMLRMLVAAGKDSEAAYFRSMLPFHMVRFARINQIINEDLHSVFSLPDDMFNALLPDLIAGAHQNADPVVLDVSWISLWFAFNRSFEPTHRNEMLEIAPLIESVYASELSVMKVDMRHLSLMQRRFPDVLIQARPSHFWKAVLNDSPEAVKAVMNLSHSHNFINIRDMMRWVLLPSLQPSLKLVLEEEAWAAANDFEDLMLTDQVYMHRDMLPEPRLDDIERFRQEGFYYTNMLEAPPEIDRVDQNTYEIARLQANMGQFRAALRRIMDDDDWVRFGGVLRTVRVKFFDARPPDDILQGLPFSYDTNEKGGLSYATIKYATETTIFYLIYNVEFSNTPDSLVLINPTYTMTKVFINKRIVERVRVGQILAVLNRRFVAYKGKMRIMDITQSLKMGTKLAAPTV</sequence>
<keyword id="KW-0167">Capsid protein</keyword>
<keyword id="KW-1153">Inner capsid protein</keyword>
<keyword id="KW-1141">T=2 icosahedral capsid protein</keyword>
<keyword id="KW-0946">Virion</keyword>
<accession>Q65750</accession>
<gene>
    <name type="primary">Segment-3</name>
    <name type="synonym">L3</name>
</gene>
<organismHost>
    <name type="scientific">Antilocapra americana</name>
    <name type="common">Pronghorn</name>
    <dbReference type="NCBI Taxonomy" id="9891"/>
</organismHost>
<organismHost>
    <name type="scientific">Bos taurus</name>
    <name type="common">Bovine</name>
    <dbReference type="NCBI Taxonomy" id="9913"/>
</organismHost>
<organismHost>
    <name type="scientific">Capra hircus</name>
    <name type="common">Goat</name>
    <dbReference type="NCBI Taxonomy" id="9925"/>
</organismHost>
<organismHost>
    <name type="scientific">Culicoides variipennis</name>
    <name type="common">Biting midge</name>
    <dbReference type="NCBI Taxonomy" id="46212"/>
</organismHost>
<organismHost>
    <name type="scientific">Ovis aries</name>
    <name type="common">Sheep</name>
    <dbReference type="NCBI Taxonomy" id="9940"/>
</organismHost>
<name>CAPSD_BTV13</name>
<protein>
    <recommendedName>
        <fullName>Inner capsid protein VP3</fullName>
    </recommendedName>
    <alternativeName>
        <fullName>Core protein VP3</fullName>
    </alternativeName>
</protein>
<evidence type="ECO:0000250" key="1">
    <source>
        <dbReference type="UniProtKB" id="P15024"/>
    </source>
</evidence>
<evidence type="ECO:0000305" key="2"/>